<dbReference type="EMBL" id="CP000668">
    <property type="protein sequence ID" value="ABP41501.1"/>
    <property type="molecule type" value="Genomic_DNA"/>
</dbReference>
<dbReference type="RefSeq" id="WP_002210491.1">
    <property type="nucleotide sequence ID" value="NZ_CP009715.1"/>
</dbReference>
<dbReference type="SMR" id="A4TQD9"/>
<dbReference type="GeneID" id="57974119"/>
<dbReference type="KEGG" id="ypp:YPDSF_3143"/>
<dbReference type="PATRIC" id="fig|386656.14.peg.1212"/>
<dbReference type="GO" id="GO:0070987">
    <property type="term" value="P:error-free translesion synthesis"/>
    <property type="evidence" value="ECO:0007669"/>
    <property type="project" value="TreeGrafter"/>
</dbReference>
<dbReference type="Gene3D" id="2.60.40.1470">
    <property type="entry name" value="ApaG domain"/>
    <property type="match status" value="1"/>
</dbReference>
<dbReference type="HAMAP" id="MF_00791">
    <property type="entry name" value="ApaG"/>
    <property type="match status" value="1"/>
</dbReference>
<dbReference type="InterPro" id="IPR007474">
    <property type="entry name" value="ApaG_domain"/>
</dbReference>
<dbReference type="InterPro" id="IPR036767">
    <property type="entry name" value="ApaG_sf"/>
</dbReference>
<dbReference type="InterPro" id="IPR023065">
    <property type="entry name" value="Uncharacterised_ApaG"/>
</dbReference>
<dbReference type="NCBIfam" id="NF003967">
    <property type="entry name" value="PRK05461.1"/>
    <property type="match status" value="1"/>
</dbReference>
<dbReference type="PANTHER" id="PTHR14289">
    <property type="entry name" value="F-BOX ONLY PROTEIN 3"/>
    <property type="match status" value="1"/>
</dbReference>
<dbReference type="PANTHER" id="PTHR14289:SF16">
    <property type="entry name" value="POLYMERASE DELTA-INTERACTING PROTEIN 2"/>
    <property type="match status" value="1"/>
</dbReference>
<dbReference type="Pfam" id="PF04379">
    <property type="entry name" value="DUF525"/>
    <property type="match status" value="1"/>
</dbReference>
<dbReference type="SUPFAM" id="SSF110069">
    <property type="entry name" value="ApaG-like"/>
    <property type="match status" value="1"/>
</dbReference>
<dbReference type="PROSITE" id="PS51087">
    <property type="entry name" value="APAG"/>
    <property type="match status" value="1"/>
</dbReference>
<organism>
    <name type="scientific">Yersinia pestis (strain Pestoides F)</name>
    <dbReference type="NCBI Taxonomy" id="386656"/>
    <lineage>
        <taxon>Bacteria</taxon>
        <taxon>Pseudomonadati</taxon>
        <taxon>Pseudomonadota</taxon>
        <taxon>Gammaproteobacteria</taxon>
        <taxon>Enterobacterales</taxon>
        <taxon>Yersiniaceae</taxon>
        <taxon>Yersinia</taxon>
    </lineage>
</organism>
<evidence type="ECO:0000255" key="1">
    <source>
        <dbReference type="HAMAP-Rule" id="MF_00791"/>
    </source>
</evidence>
<reference key="1">
    <citation type="submission" date="2007-02" db="EMBL/GenBank/DDBJ databases">
        <title>Complete sequence of chromosome of Yersinia pestis Pestoides F.</title>
        <authorList>
            <consortium name="US DOE Joint Genome Institute"/>
            <person name="Copeland A."/>
            <person name="Lucas S."/>
            <person name="Lapidus A."/>
            <person name="Barry K."/>
            <person name="Detter J.C."/>
            <person name="Glavina del Rio T."/>
            <person name="Hammon N."/>
            <person name="Israni S."/>
            <person name="Dalin E."/>
            <person name="Tice H."/>
            <person name="Pitluck S."/>
            <person name="Di Bartolo G."/>
            <person name="Chain P."/>
            <person name="Malfatti S."/>
            <person name="Shin M."/>
            <person name="Vergez L."/>
            <person name="Schmutz J."/>
            <person name="Larimer F."/>
            <person name="Land M."/>
            <person name="Hauser L."/>
            <person name="Worsham P."/>
            <person name="Chu M."/>
            <person name="Bearden S."/>
            <person name="Garcia E."/>
            <person name="Richardson P."/>
        </authorList>
    </citation>
    <scope>NUCLEOTIDE SEQUENCE [LARGE SCALE GENOMIC DNA]</scope>
    <source>
        <strain>Pestoides F</strain>
    </source>
</reference>
<protein>
    <recommendedName>
        <fullName evidence="1">Protein ApaG</fullName>
    </recommendedName>
</protein>
<proteinExistence type="inferred from homology"/>
<accession>A4TQD9</accession>
<feature type="chain" id="PRO_1000083676" description="Protein ApaG">
    <location>
        <begin position="1"/>
        <end position="125"/>
    </location>
</feature>
<feature type="domain" description="ApaG" evidence="1">
    <location>
        <begin position="1"/>
        <end position="125"/>
    </location>
</feature>
<sequence>MIEQPRICVQVHSIYVETQSIPEEERFVFAYTVTVRNLGRSNVQLLGRYWLITNSNGRQTEVQGEGVIGEQPLILPGNEFQYTSGAVLETPLGTMEGHYEMIDHLGQAFRTVIPVFRLAIPALIH</sequence>
<name>APAG_YERPP</name>
<gene>
    <name evidence="1" type="primary">apaG</name>
    <name type="ordered locus">YPDSF_3143</name>
</gene>